<protein>
    <recommendedName>
        <fullName evidence="10">Phospholipid phosphatase-related protein type 2</fullName>
    </recommendedName>
    <alternativeName>
        <fullName evidence="1">Inactive phospholipid phosphatase PLPPR2</fullName>
    </alternativeName>
    <alternativeName>
        <fullName evidence="9">Lipid phosphate phosphatase-related protein type 2</fullName>
    </alternativeName>
    <alternativeName>
        <fullName evidence="11">Plasticity-related gene 4 protein</fullName>
        <shortName evidence="7">PRG-4</shortName>
    </alternativeName>
</protein>
<proteinExistence type="evidence at protein level"/>
<feature type="chain" id="PRO_0000317538" description="Phospholipid phosphatase-related protein type 2">
    <location>
        <begin position="1"/>
        <end position="343"/>
    </location>
</feature>
<feature type="transmembrane region" description="Helical" evidence="3">
    <location>
        <begin position="12"/>
        <end position="32"/>
    </location>
</feature>
<feature type="transmembrane region" description="Helical" evidence="3">
    <location>
        <begin position="69"/>
        <end position="89"/>
    </location>
</feature>
<feature type="transmembrane region" description="Helical" evidence="3">
    <location>
        <begin position="129"/>
        <end position="149"/>
    </location>
</feature>
<feature type="transmembrane region" description="Helical" evidence="3">
    <location>
        <begin position="210"/>
        <end position="230"/>
    </location>
</feature>
<feature type="transmembrane region" description="Helical" evidence="3">
    <location>
        <begin position="239"/>
        <end position="259"/>
    </location>
</feature>
<feature type="transmembrane region" description="Helical" evidence="3">
    <location>
        <begin position="266"/>
        <end position="286"/>
    </location>
</feature>
<feature type="region of interest" description="Disordered" evidence="4">
    <location>
        <begin position="290"/>
        <end position="343"/>
    </location>
</feature>
<feature type="compositionally biased region" description="Basic residues" evidence="4">
    <location>
        <begin position="322"/>
        <end position="335"/>
    </location>
</feature>
<feature type="modified residue" description="Phosphoserine" evidence="2">
    <location>
        <position position="299"/>
    </location>
</feature>
<feature type="modified residue" description="Phosphoserine" evidence="2">
    <location>
        <position position="312"/>
    </location>
</feature>
<feature type="glycosylation site" description="N-linked (GlcNAc...) asparagine" evidence="3">
    <location>
        <position position="165"/>
    </location>
</feature>
<feature type="splice variant" id="VSP_031010" description="In isoform 2." evidence="6 8">
    <location>
        <begin position="23"/>
        <end position="47"/>
    </location>
</feature>
<feature type="splice variant" id="VSP_031011" description="In isoform 2." evidence="6 8">
    <original>NPRSAGRIRHRHGSPHPSRRTAPAVAT</original>
    <variation>LSVAQEPEVCRPHSTPARLTPSKSQNCARRGHLIPSCVSSRAPAMCSSPRVPRPRLRSEPTPLPLPLPLPAPTPSQGPSPSSPGPGGPGGGGGRGRKLLLPTPLLRDLYTLSGLYPSPFHRDNFSPYLFASRDHLL</variation>
    <location>
        <begin position="317"/>
        <end position="343"/>
    </location>
</feature>
<feature type="sequence variant" id="VAR_038546" description="In a colorectal cancer sample; somatic mutation." evidence="5">
    <original>T</original>
    <variation>M</variation>
    <location>
        <position position="155"/>
    </location>
</feature>
<feature type="sequence conflict" description="In Ref. 3; BAB14414." evidence="10" ref="3">
    <original>F</original>
    <variation>L</variation>
    <location>
        <position position="42"/>
    </location>
</feature>
<feature type="sequence conflict" description="In Ref. 3; BAC04443." evidence="10" ref="3">
    <original>Y</original>
    <variation>H</variation>
    <location>
        <position position="259"/>
    </location>
</feature>
<organism>
    <name type="scientific">Homo sapiens</name>
    <name type="common">Human</name>
    <dbReference type="NCBI Taxonomy" id="9606"/>
    <lineage>
        <taxon>Eukaryota</taxon>
        <taxon>Metazoa</taxon>
        <taxon>Chordata</taxon>
        <taxon>Craniata</taxon>
        <taxon>Vertebrata</taxon>
        <taxon>Euteleostomi</taxon>
        <taxon>Mammalia</taxon>
        <taxon>Eutheria</taxon>
        <taxon>Euarchontoglires</taxon>
        <taxon>Primates</taxon>
        <taxon>Haplorrhini</taxon>
        <taxon>Catarrhini</taxon>
        <taxon>Hominidae</taxon>
        <taxon>Homo</taxon>
    </lineage>
</organism>
<gene>
    <name evidence="12" type="primary">PLPPR2</name>
    <name evidence="9" type="synonym">LPPR2</name>
    <name evidence="2" type="synonym">PRG4</name>
</gene>
<evidence type="ECO:0000250" key="1">
    <source>
        <dbReference type="UniProtKB" id="Q6WAY2"/>
    </source>
</evidence>
<evidence type="ECO:0000250" key="2">
    <source>
        <dbReference type="UniProtKB" id="Q8VCY8"/>
    </source>
</evidence>
<evidence type="ECO:0000255" key="3"/>
<evidence type="ECO:0000256" key="4">
    <source>
        <dbReference type="SAM" id="MobiDB-lite"/>
    </source>
</evidence>
<evidence type="ECO:0000269" key="5">
    <source>
    </source>
</evidence>
<evidence type="ECO:0000303" key="6">
    <source>
    </source>
</evidence>
<evidence type="ECO:0000303" key="7">
    <source>
    </source>
</evidence>
<evidence type="ECO:0000303" key="8">
    <source>
    </source>
</evidence>
<evidence type="ECO:0000303" key="9">
    <source ref="2"/>
</evidence>
<evidence type="ECO:0000305" key="10"/>
<evidence type="ECO:0000305" key="11">
    <source>
    </source>
</evidence>
<evidence type="ECO:0000312" key="12">
    <source>
        <dbReference type="HGNC" id="HGNC:29566"/>
    </source>
</evidence>
<sequence>MAGGRPHLKRSFSIIPCFVFVESVLLGIVILLAYRLEFTDTFPVHTQGFFCYDSTYAKPYPGPEAASRVPPALVYALVTAGPTLTILLGELARAFFPAPPSAVPVIGESTIVSGACCRFSPPVRRLVRFLGVYSFGLFTTTIFANAGQVVTGNPTPHFLSVCRPNYTALGCLPPSPDRPGPDRFVTDQGACAGSPSLVAAARRAFPCKDAALCAYAVTYTAMYVTLVFRVKGSRLVKPSLCLALLCPAFLVGVVRVAEYRNHWSDVLAGFLTGAAIATFLVTCVVHNFQSRPPSGRRLSPWEDLGQAPTMDSPLEKNPRSAGRIRHRHGSPHPSRRTAPAVAT</sequence>
<accession>Q96GM1</accession>
<accession>Q5CZ76</accession>
<accession>Q8N1U4</accession>
<accession>Q9H929</accession>
<keyword id="KW-0025">Alternative splicing</keyword>
<keyword id="KW-0325">Glycoprotein</keyword>
<keyword id="KW-0472">Membrane</keyword>
<keyword id="KW-0597">Phosphoprotein</keyword>
<keyword id="KW-1267">Proteomics identification</keyword>
<keyword id="KW-1185">Reference proteome</keyword>
<keyword id="KW-0812">Transmembrane</keyword>
<keyword id="KW-1133">Transmembrane helix</keyword>
<dbReference type="EMBL" id="AY339628">
    <property type="protein sequence ID" value="AAQ73540.1"/>
    <property type="molecule type" value="mRNA"/>
</dbReference>
<dbReference type="EMBL" id="AY304516">
    <property type="protein sequence ID" value="AAP72153.1"/>
    <property type="molecule type" value="mRNA"/>
</dbReference>
<dbReference type="EMBL" id="AK094869">
    <property type="protein sequence ID" value="BAC04443.1"/>
    <property type="molecule type" value="mRNA"/>
</dbReference>
<dbReference type="EMBL" id="AK023117">
    <property type="protein sequence ID" value="BAB14414.1"/>
    <property type="molecule type" value="mRNA"/>
</dbReference>
<dbReference type="EMBL" id="CH471106">
    <property type="protein sequence ID" value="EAW84200.1"/>
    <property type="molecule type" value="Genomic_DNA"/>
</dbReference>
<dbReference type="EMBL" id="BC009378">
    <property type="protein sequence ID" value="AAH09378.1"/>
    <property type="molecule type" value="mRNA"/>
</dbReference>
<dbReference type="EMBL" id="CR936652">
    <property type="protein sequence ID" value="CAI56790.1"/>
    <property type="molecule type" value="Transcribed_RNA"/>
</dbReference>
<dbReference type="CCDS" id="CCDS12258.1">
    <molecule id="Q96GM1-1"/>
</dbReference>
<dbReference type="CCDS" id="CCDS59352.1">
    <molecule id="Q96GM1-2"/>
</dbReference>
<dbReference type="RefSeq" id="NP_001164106.1">
    <molecule id="Q96GM1-2"/>
    <property type="nucleotide sequence ID" value="NM_001170635.2"/>
</dbReference>
<dbReference type="RefSeq" id="NP_001380823.1">
    <molecule id="Q96GM1-1"/>
    <property type="nucleotide sequence ID" value="NM_001393894.1"/>
</dbReference>
<dbReference type="RefSeq" id="NP_073574.2">
    <molecule id="Q96GM1-1"/>
    <property type="nucleotide sequence ID" value="NM_022737.3"/>
</dbReference>
<dbReference type="RefSeq" id="XP_016882637.1">
    <molecule id="Q96GM1-2"/>
    <property type="nucleotide sequence ID" value="XM_017027148.2"/>
</dbReference>
<dbReference type="RefSeq" id="XP_054177753.1">
    <molecule id="Q96GM1-2"/>
    <property type="nucleotide sequence ID" value="XM_054321778.1"/>
</dbReference>
<dbReference type="BioGRID" id="122264">
    <property type="interactions" value="71"/>
</dbReference>
<dbReference type="FunCoup" id="Q96GM1">
    <property type="interactions" value="39"/>
</dbReference>
<dbReference type="IntAct" id="Q96GM1">
    <property type="interactions" value="62"/>
</dbReference>
<dbReference type="STRING" id="9606.ENSP00000466898"/>
<dbReference type="DEPOD" id="PLPPR2"/>
<dbReference type="GlyCosmos" id="Q96GM1">
    <property type="glycosylation" value="1 site, No reported glycans"/>
</dbReference>
<dbReference type="GlyGen" id="Q96GM1">
    <property type="glycosylation" value="1 site, 1 N-linked glycan (1 site)"/>
</dbReference>
<dbReference type="iPTMnet" id="Q96GM1"/>
<dbReference type="PhosphoSitePlus" id="Q96GM1"/>
<dbReference type="BioMuta" id="PLPPR2"/>
<dbReference type="DMDM" id="74760839"/>
<dbReference type="jPOST" id="Q96GM1"/>
<dbReference type="MassIVE" id="Q96GM1"/>
<dbReference type="PaxDb" id="9606-ENSP00000466898"/>
<dbReference type="PeptideAtlas" id="Q96GM1"/>
<dbReference type="ProteomicsDB" id="76643">
    <molecule id="Q96GM1-1"/>
</dbReference>
<dbReference type="ProteomicsDB" id="76644">
    <molecule id="Q96GM1-2"/>
</dbReference>
<dbReference type="Antibodypedia" id="25796">
    <property type="antibodies" value="88 antibodies from 22 providers"/>
</dbReference>
<dbReference type="DNASU" id="64748"/>
<dbReference type="Ensembl" id="ENST00000251473.9">
    <molecule id="Q96GM1-1"/>
    <property type="protein sequence ID" value="ENSP00000251473.4"/>
    <property type="gene ID" value="ENSG00000105520.11"/>
</dbReference>
<dbReference type="Ensembl" id="ENST00000591608.2">
    <molecule id="Q96GM1-2"/>
    <property type="protein sequence ID" value="ENSP00000466898.1"/>
    <property type="gene ID" value="ENSG00000105520.11"/>
</dbReference>
<dbReference type="GeneID" id="64748"/>
<dbReference type="KEGG" id="hsa:64748"/>
<dbReference type="UCSC" id="uc002mre.2">
    <molecule id="Q96GM1-1"/>
    <property type="organism name" value="human"/>
</dbReference>
<dbReference type="AGR" id="HGNC:29566"/>
<dbReference type="CTD" id="64748"/>
<dbReference type="DisGeNET" id="64748"/>
<dbReference type="GeneCards" id="PLPPR2"/>
<dbReference type="HGNC" id="HGNC:29566">
    <property type="gene designation" value="PLPPR2"/>
</dbReference>
<dbReference type="HPA" id="ENSG00000105520">
    <property type="expression patterns" value="Tissue enhanced (brain)"/>
</dbReference>
<dbReference type="MIM" id="619591">
    <property type="type" value="gene"/>
</dbReference>
<dbReference type="neXtProt" id="NX_Q96GM1"/>
<dbReference type="OpenTargets" id="ENSG00000105520"/>
<dbReference type="VEuPathDB" id="HostDB:ENSG00000105520"/>
<dbReference type="eggNOG" id="KOG3030">
    <property type="taxonomic scope" value="Eukaryota"/>
</dbReference>
<dbReference type="GeneTree" id="ENSGT00940000158145"/>
<dbReference type="HOGENOM" id="CLU_021458_1_1_1"/>
<dbReference type="InParanoid" id="Q96GM1"/>
<dbReference type="OMA" id="NAYIQPF"/>
<dbReference type="OrthoDB" id="8907274at2759"/>
<dbReference type="PAN-GO" id="Q96GM1">
    <property type="GO annotations" value="6 GO annotations based on evolutionary models"/>
</dbReference>
<dbReference type="PhylomeDB" id="Q96GM1"/>
<dbReference type="BRENDA" id="3.1.3.4">
    <property type="organism ID" value="2681"/>
</dbReference>
<dbReference type="PathwayCommons" id="Q96GM1"/>
<dbReference type="Reactome" id="R-HSA-419408">
    <property type="pathway name" value="Lysosphingolipid and LPA receptors"/>
</dbReference>
<dbReference type="SignaLink" id="Q96GM1"/>
<dbReference type="BioGRID-ORCS" id="64748">
    <property type="hits" value="9 hits in 1015 CRISPR screens"/>
</dbReference>
<dbReference type="ChiTaRS" id="PLPPR2">
    <property type="organism name" value="human"/>
</dbReference>
<dbReference type="GenomeRNAi" id="64748"/>
<dbReference type="Pharos" id="Q96GM1">
    <property type="development level" value="Tdark"/>
</dbReference>
<dbReference type="PRO" id="PR:Q96GM1"/>
<dbReference type="Proteomes" id="UP000005640">
    <property type="component" value="Chromosome 19"/>
</dbReference>
<dbReference type="RNAct" id="Q96GM1">
    <property type="molecule type" value="protein"/>
</dbReference>
<dbReference type="Bgee" id="ENSG00000105520">
    <property type="expression patterns" value="Expressed in cortical plate and 172 other cell types or tissues"/>
</dbReference>
<dbReference type="ExpressionAtlas" id="Q96GM1">
    <property type="expression patterns" value="baseline and differential"/>
</dbReference>
<dbReference type="GO" id="GO:0005886">
    <property type="term" value="C:plasma membrane"/>
    <property type="evidence" value="ECO:0000318"/>
    <property type="project" value="GO_Central"/>
</dbReference>
<dbReference type="GO" id="GO:0008195">
    <property type="term" value="F:phosphatidate phosphatase activity"/>
    <property type="evidence" value="ECO:0000318"/>
    <property type="project" value="GO_Central"/>
</dbReference>
<dbReference type="GO" id="GO:0046839">
    <property type="term" value="P:phospholipid dephosphorylation"/>
    <property type="evidence" value="ECO:0000318"/>
    <property type="project" value="GO_Central"/>
</dbReference>
<dbReference type="GO" id="GO:0006644">
    <property type="term" value="P:phospholipid metabolic process"/>
    <property type="evidence" value="ECO:0000318"/>
    <property type="project" value="GO_Central"/>
</dbReference>
<dbReference type="GO" id="GO:0007165">
    <property type="term" value="P:signal transduction"/>
    <property type="evidence" value="ECO:0000318"/>
    <property type="project" value="GO_Central"/>
</dbReference>
<dbReference type="CDD" id="cd03384">
    <property type="entry name" value="PAP2_wunen"/>
    <property type="match status" value="1"/>
</dbReference>
<dbReference type="FunFam" id="1.20.144.10:FF:000006">
    <property type="entry name" value="Phospholipid phosphatase-related protein type 2 isoform X1"/>
    <property type="match status" value="1"/>
</dbReference>
<dbReference type="Gene3D" id="1.20.144.10">
    <property type="entry name" value="Phosphatidic acid phosphatase type 2/haloperoxidase"/>
    <property type="match status" value="1"/>
</dbReference>
<dbReference type="InterPro" id="IPR036938">
    <property type="entry name" value="P_Acid_Pase_2/haloperoxi_sf"/>
</dbReference>
<dbReference type="InterPro" id="IPR000326">
    <property type="entry name" value="P_Acid_Pase_2/haloperoxidase"/>
</dbReference>
<dbReference type="InterPro" id="IPR043216">
    <property type="entry name" value="PA_PP_rel"/>
</dbReference>
<dbReference type="PANTHER" id="PTHR10165">
    <property type="entry name" value="LIPID PHOSPHATE PHOSPHATASE"/>
    <property type="match status" value="1"/>
</dbReference>
<dbReference type="PANTHER" id="PTHR10165:SF15">
    <property type="entry name" value="PHOSPHOLIPID PHOSPHATASE-RELATED PROTEIN TYPE 2"/>
    <property type="match status" value="1"/>
</dbReference>
<dbReference type="Pfam" id="PF01569">
    <property type="entry name" value="PAP2"/>
    <property type="match status" value="1"/>
</dbReference>
<dbReference type="SMART" id="SM00014">
    <property type="entry name" value="acidPPc"/>
    <property type="match status" value="1"/>
</dbReference>
<dbReference type="SUPFAM" id="SSF48317">
    <property type="entry name" value="Acid phosphatase/Vanadium-dependent haloperoxidase"/>
    <property type="match status" value="1"/>
</dbReference>
<name>PLPR2_HUMAN</name>
<comment type="interaction">
    <interactant intactId="EBI-12955265">
        <id>Q96GM1</id>
    </interactant>
    <interactant intactId="EBI-11343438">
        <id>Q3SXY8</id>
        <label>ARL13B</label>
    </interactant>
    <organismsDiffer>false</organismsDiffer>
    <experiments>3</experiments>
</comment>
<comment type="interaction">
    <interactant intactId="EBI-12955265">
        <id>Q96GM1</id>
    </interactant>
    <interactant intactId="EBI-7797864">
        <id>P11912</id>
        <label>CD79A</label>
    </interactant>
    <organismsDiffer>false</organismsDiffer>
    <experiments>3</experiments>
</comment>
<comment type="interaction">
    <interactant intactId="EBI-12955265">
        <id>Q96GM1</id>
    </interactant>
    <interactant intactId="EBI-752069">
        <id>Q9H5X1</id>
        <label>CIAO2A</label>
    </interactant>
    <organismsDiffer>false</organismsDiffer>
    <experiments>3</experiments>
</comment>
<comment type="interaction">
    <interactant intactId="EBI-12955265">
        <id>Q96GM1</id>
    </interactant>
    <interactant intactId="EBI-1045797">
        <id>Q8N5K1</id>
        <label>CISD2</label>
    </interactant>
    <organismsDiffer>false</organismsDiffer>
    <experiments>3</experiments>
</comment>
<comment type="interaction">
    <interactant intactId="EBI-12955265">
        <id>Q96GM1</id>
    </interactant>
    <interactant intactId="EBI-18400628">
        <id>O00501</id>
        <label>CLDN5</label>
    </interactant>
    <organismsDiffer>false</organismsDiffer>
    <experiments>3</experiments>
</comment>
<comment type="interaction">
    <interactant intactId="EBI-12955265">
        <id>Q96GM1</id>
    </interactant>
    <interactant intactId="EBI-18341636">
        <id>O95484</id>
        <label>CLDN9</label>
    </interactant>
    <organismsDiffer>false</organismsDiffer>
    <experiments>3</experiments>
</comment>
<comment type="interaction">
    <interactant intactId="EBI-12955265">
        <id>Q96GM1</id>
    </interactant>
    <interactant intactId="EBI-6942903">
        <id>Q96BA8</id>
        <label>CREB3L1</label>
    </interactant>
    <organismsDiffer>false</organismsDiffer>
    <experiments>3</experiments>
</comment>
<comment type="interaction">
    <interactant intactId="EBI-12955265">
        <id>Q96GM1</id>
    </interactant>
    <interactant intactId="EBI-7797098">
        <id>P04921</id>
        <label>GYPC</label>
    </interactant>
    <organismsDiffer>false</organismsDiffer>
    <experiments>3</experiments>
</comment>
<comment type="interaction">
    <interactant intactId="EBI-12955265">
        <id>Q96GM1</id>
    </interactant>
    <interactant intactId="EBI-8632435">
        <id>P43628</id>
        <label>KIR2DL3</label>
    </interactant>
    <organismsDiffer>false</organismsDiffer>
    <experiments>3</experiments>
</comment>
<comment type="interaction">
    <interactant intactId="EBI-12955265">
        <id>Q96GM1</id>
    </interactant>
    <interactant intactId="EBI-17200970">
        <id>Q6UWN5</id>
        <label>LYPD5</label>
    </interactant>
    <organismsDiffer>false</organismsDiffer>
    <experiments>3</experiments>
</comment>
<comment type="interaction">
    <interactant intactId="EBI-12955265">
        <id>Q96GM1</id>
    </interactant>
    <interactant intactId="EBI-10317612">
        <id>Q9P0N8</id>
        <label>MARCHF2</label>
    </interactant>
    <organismsDiffer>false</organismsDiffer>
    <experiments>3</experiments>
</comment>
<comment type="interaction">
    <interactant intactId="EBI-12955265">
        <id>Q96GM1</id>
    </interactant>
    <interactant intactId="EBI-17247926">
        <id>Q9NY72</id>
        <label>SCN3B</label>
    </interactant>
    <organismsDiffer>false</organismsDiffer>
    <experiments>3</experiments>
</comment>
<comment type="interaction">
    <interactant intactId="EBI-12955265">
        <id>Q96GM1</id>
    </interactant>
    <interactant intactId="EBI-17640454">
        <id>Q96PQ1</id>
        <label>SIGLEC12</label>
    </interactant>
    <organismsDiffer>false</organismsDiffer>
    <experiments>3</experiments>
</comment>
<comment type="interaction">
    <interactant intactId="EBI-12955265">
        <id>Q96GM1</id>
    </interactant>
    <interactant intactId="EBI-3923779">
        <id>Q9BZV2</id>
        <label>SLC19A3</label>
    </interactant>
    <organismsDiffer>false</organismsDiffer>
    <experiments>3</experiments>
</comment>
<comment type="interaction">
    <interactant intactId="EBI-12955265">
        <id>Q96GM1</id>
    </interactant>
    <interactant intactId="EBI-10226799">
        <id>Q0VAQ4</id>
        <label>SMAGP</label>
    </interactant>
    <organismsDiffer>false</organismsDiffer>
    <experiments>3</experiments>
</comment>
<comment type="interaction">
    <interactant intactId="EBI-12955265">
        <id>Q96GM1</id>
    </interactant>
    <interactant intactId="EBI-17280858">
        <id>Q8WWF3</id>
        <label>SSMEM1</label>
    </interactant>
    <organismsDiffer>false</organismsDiffer>
    <experiments>3</experiments>
</comment>
<comment type="interaction">
    <interactant intactId="EBI-12955265">
        <id>Q96GM1</id>
    </interactant>
    <interactant intactId="EBI-2691717">
        <id>Q86Y82</id>
        <label>STX12</label>
    </interactant>
    <organismsDiffer>false</organismsDiffer>
    <experiments>3</experiments>
</comment>
<comment type="interaction">
    <interactant intactId="EBI-12955265">
        <id>Q96GM1</id>
    </interactant>
    <interactant intactId="EBI-1056827">
        <id>Q9BVK6</id>
        <label>TMED9</label>
    </interactant>
    <organismsDiffer>false</organismsDiffer>
    <experiments>3</experiments>
</comment>
<comment type="interaction">
    <interactant intactId="EBI-12955265">
        <id>Q96GM1</id>
    </interactant>
    <interactant intactId="EBI-10982110">
        <id>Q96Q45-2</id>
        <label>TMEM237</label>
    </interactant>
    <organismsDiffer>false</organismsDiffer>
    <experiments>3</experiments>
</comment>
<comment type="interaction">
    <interactant intactId="EBI-12955265">
        <id>Q96GM1</id>
    </interactant>
    <interactant intactId="EBI-988826">
        <id>Q9Y385</id>
        <label>UBE2J1</label>
    </interactant>
    <organismsDiffer>false</organismsDiffer>
    <experiments>3</experiments>
</comment>
<comment type="interaction">
    <interactant intactId="EBI-12955265">
        <id>Q96GM1</id>
    </interactant>
    <interactant intactId="EBI-744988">
        <id>Q9H7M9</id>
        <label>VSIR</label>
    </interactant>
    <organismsDiffer>false</organismsDiffer>
    <experiments>3</experiments>
</comment>
<comment type="subcellular location">
    <subcellularLocation>
        <location evidence="3">Membrane</location>
        <topology evidence="3">Multi-pass membrane protein</topology>
    </subcellularLocation>
</comment>
<comment type="alternative products">
    <event type="alternative splicing"/>
    <isoform>
        <id>Q96GM1-1</id>
        <name>1</name>
        <sequence type="displayed"/>
    </isoform>
    <isoform>
        <id>Q96GM1-2</id>
        <name>2</name>
        <sequence type="described" ref="VSP_031010 VSP_031011"/>
    </isoform>
</comment>
<comment type="similarity">
    <text evidence="10">Belongs to the PA-phosphatase related phosphoesterase family.</text>
</comment>
<comment type="caution">
    <text evidence="1">Has most probably no phospholipid phosphatase activity (By similarity). This is supported by the fact that the phosphatase sequence motifs as well as the His residue acting as a nucleophile in active phosphatases of the PA-phosphatase related phosphoesterase family are not conserved (By similarity).</text>
</comment>
<reference key="1">
    <citation type="journal article" date="2004" name="Eur. J. Neurosci.">
        <title>Molecular cloning and expression regulation of PRG-3, a new member of the plasticity-related gene family.</title>
        <authorList>
            <person name="Savaskan N.E."/>
            <person name="Brauer A.U."/>
            <person name="Nitsch R."/>
        </authorList>
    </citation>
    <scope>NUCLEOTIDE SEQUENCE [MRNA] (ISOFORM 1)</scope>
</reference>
<reference key="2">
    <citation type="submission" date="2003-05" db="EMBL/GenBank/DDBJ databases">
        <title>Lipid phosphate phosphatase related proteins.</title>
        <authorList>
            <person name="Morris A.J."/>
            <person name="Sigal Y.J."/>
            <person name="McDermott M."/>
            <person name="Sciorra V.A."/>
        </authorList>
    </citation>
    <scope>NUCLEOTIDE SEQUENCE [MRNA] (ISOFORM 1)</scope>
</reference>
<reference key="3">
    <citation type="journal article" date="2004" name="Nat. Genet.">
        <title>Complete sequencing and characterization of 21,243 full-length human cDNAs.</title>
        <authorList>
            <person name="Ota T."/>
            <person name="Suzuki Y."/>
            <person name="Nishikawa T."/>
            <person name="Otsuki T."/>
            <person name="Sugiyama T."/>
            <person name="Irie R."/>
            <person name="Wakamatsu A."/>
            <person name="Hayashi K."/>
            <person name="Sato H."/>
            <person name="Nagai K."/>
            <person name="Kimura K."/>
            <person name="Makita H."/>
            <person name="Sekine M."/>
            <person name="Obayashi M."/>
            <person name="Nishi T."/>
            <person name="Shibahara T."/>
            <person name="Tanaka T."/>
            <person name="Ishii S."/>
            <person name="Yamamoto J."/>
            <person name="Saito K."/>
            <person name="Kawai Y."/>
            <person name="Isono Y."/>
            <person name="Nakamura Y."/>
            <person name="Nagahari K."/>
            <person name="Murakami K."/>
            <person name="Yasuda T."/>
            <person name="Iwayanagi T."/>
            <person name="Wagatsuma M."/>
            <person name="Shiratori A."/>
            <person name="Sudo H."/>
            <person name="Hosoiri T."/>
            <person name="Kaku Y."/>
            <person name="Kodaira H."/>
            <person name="Kondo H."/>
            <person name="Sugawara M."/>
            <person name="Takahashi M."/>
            <person name="Kanda K."/>
            <person name="Yokoi T."/>
            <person name="Furuya T."/>
            <person name="Kikkawa E."/>
            <person name="Omura Y."/>
            <person name="Abe K."/>
            <person name="Kamihara K."/>
            <person name="Katsuta N."/>
            <person name="Sato K."/>
            <person name="Tanikawa M."/>
            <person name="Yamazaki M."/>
            <person name="Ninomiya K."/>
            <person name="Ishibashi T."/>
            <person name="Yamashita H."/>
            <person name="Murakawa K."/>
            <person name="Fujimori K."/>
            <person name="Tanai H."/>
            <person name="Kimata M."/>
            <person name="Watanabe M."/>
            <person name="Hiraoka S."/>
            <person name="Chiba Y."/>
            <person name="Ishida S."/>
            <person name="Ono Y."/>
            <person name="Takiguchi S."/>
            <person name="Watanabe S."/>
            <person name="Yosida M."/>
            <person name="Hotuta T."/>
            <person name="Kusano J."/>
            <person name="Kanehori K."/>
            <person name="Takahashi-Fujii A."/>
            <person name="Hara H."/>
            <person name="Tanase T.-O."/>
            <person name="Nomura Y."/>
            <person name="Togiya S."/>
            <person name="Komai F."/>
            <person name="Hara R."/>
            <person name="Takeuchi K."/>
            <person name="Arita M."/>
            <person name="Imose N."/>
            <person name="Musashino K."/>
            <person name="Yuuki H."/>
            <person name="Oshima A."/>
            <person name="Sasaki N."/>
            <person name="Aotsuka S."/>
            <person name="Yoshikawa Y."/>
            <person name="Matsunawa H."/>
            <person name="Ichihara T."/>
            <person name="Shiohata N."/>
            <person name="Sano S."/>
            <person name="Moriya S."/>
            <person name="Momiyama H."/>
            <person name="Satoh N."/>
            <person name="Takami S."/>
            <person name="Terashima Y."/>
            <person name="Suzuki O."/>
            <person name="Nakagawa S."/>
            <person name="Senoh A."/>
            <person name="Mizoguchi H."/>
            <person name="Goto Y."/>
            <person name="Shimizu F."/>
            <person name="Wakebe H."/>
            <person name="Hishigaki H."/>
            <person name="Watanabe T."/>
            <person name="Sugiyama A."/>
            <person name="Takemoto M."/>
            <person name="Kawakami B."/>
            <person name="Yamazaki M."/>
            <person name="Watanabe K."/>
            <person name="Kumagai A."/>
            <person name="Itakura S."/>
            <person name="Fukuzumi Y."/>
            <person name="Fujimori Y."/>
            <person name="Komiyama M."/>
            <person name="Tashiro H."/>
            <person name="Tanigami A."/>
            <person name="Fujiwara T."/>
            <person name="Ono T."/>
            <person name="Yamada K."/>
            <person name="Fujii Y."/>
            <person name="Ozaki K."/>
            <person name="Hirao M."/>
            <person name="Ohmori Y."/>
            <person name="Kawabata A."/>
            <person name="Hikiji T."/>
            <person name="Kobatake N."/>
            <person name="Inagaki H."/>
            <person name="Ikema Y."/>
            <person name="Okamoto S."/>
            <person name="Okitani R."/>
            <person name="Kawakami T."/>
            <person name="Noguchi S."/>
            <person name="Itoh T."/>
            <person name="Shigeta K."/>
            <person name="Senba T."/>
            <person name="Matsumura K."/>
            <person name="Nakajima Y."/>
            <person name="Mizuno T."/>
            <person name="Morinaga M."/>
            <person name="Sasaki M."/>
            <person name="Togashi T."/>
            <person name="Oyama M."/>
            <person name="Hata H."/>
            <person name="Watanabe M."/>
            <person name="Komatsu T."/>
            <person name="Mizushima-Sugano J."/>
            <person name="Satoh T."/>
            <person name="Shirai Y."/>
            <person name="Takahashi Y."/>
            <person name="Nakagawa K."/>
            <person name="Okumura K."/>
            <person name="Nagase T."/>
            <person name="Nomura N."/>
            <person name="Kikuchi H."/>
            <person name="Masuho Y."/>
            <person name="Yamashita R."/>
            <person name="Nakai K."/>
            <person name="Yada T."/>
            <person name="Nakamura Y."/>
            <person name="Ohara O."/>
            <person name="Isogai T."/>
            <person name="Sugano S."/>
        </authorList>
    </citation>
    <scope>NUCLEOTIDE SEQUENCE [LARGE SCALE MRNA] (ISOFORMS 1 AND 2)</scope>
    <source>
        <tissue>Caudate nucleus</tissue>
    </source>
</reference>
<reference key="4">
    <citation type="submission" date="2005-07" db="EMBL/GenBank/DDBJ databases">
        <authorList>
            <person name="Mural R.J."/>
            <person name="Istrail S."/>
            <person name="Sutton G.G."/>
            <person name="Florea L."/>
            <person name="Halpern A.L."/>
            <person name="Mobarry C.M."/>
            <person name="Lippert R."/>
            <person name="Walenz B."/>
            <person name="Shatkay H."/>
            <person name="Dew I."/>
            <person name="Miller J.R."/>
            <person name="Flanigan M.J."/>
            <person name="Edwards N.J."/>
            <person name="Bolanos R."/>
            <person name="Fasulo D."/>
            <person name="Halldorsson B.V."/>
            <person name="Hannenhalli S."/>
            <person name="Turner R."/>
            <person name="Yooseph S."/>
            <person name="Lu F."/>
            <person name="Nusskern D.R."/>
            <person name="Shue B.C."/>
            <person name="Zheng X.H."/>
            <person name="Zhong F."/>
            <person name="Delcher A.L."/>
            <person name="Huson D.H."/>
            <person name="Kravitz S.A."/>
            <person name="Mouchard L."/>
            <person name="Reinert K."/>
            <person name="Remington K.A."/>
            <person name="Clark A.G."/>
            <person name="Waterman M.S."/>
            <person name="Eichler E.E."/>
            <person name="Adams M.D."/>
            <person name="Hunkapiller M.W."/>
            <person name="Myers E.W."/>
            <person name="Venter J.C."/>
        </authorList>
    </citation>
    <scope>NUCLEOTIDE SEQUENCE [LARGE SCALE GENOMIC DNA]</scope>
</reference>
<reference key="5">
    <citation type="journal article" date="2004" name="Genome Res.">
        <title>The status, quality, and expansion of the NIH full-length cDNA project: the Mammalian Gene Collection (MGC).</title>
        <authorList>
            <consortium name="The MGC Project Team"/>
        </authorList>
    </citation>
    <scope>NUCLEOTIDE SEQUENCE [LARGE SCALE MRNA] (ISOFORM 1)</scope>
    <source>
        <tissue>Brain</tissue>
    </source>
</reference>
<reference key="6">
    <citation type="journal article" date="2007" name="BMC Genomics">
        <title>The full-ORF clone resource of the German cDNA consortium.</title>
        <authorList>
            <person name="Bechtel S."/>
            <person name="Rosenfelder H."/>
            <person name="Duda A."/>
            <person name="Schmidt C.P."/>
            <person name="Ernst U."/>
            <person name="Wellenreuther R."/>
            <person name="Mehrle A."/>
            <person name="Schuster C."/>
            <person name="Bahr A."/>
            <person name="Bloecker H."/>
            <person name="Heubner D."/>
            <person name="Hoerlein A."/>
            <person name="Michel G."/>
            <person name="Wedler H."/>
            <person name="Koehrer K."/>
            <person name="Ottenwaelder B."/>
            <person name="Poustka A."/>
            <person name="Wiemann S."/>
            <person name="Schupp I."/>
        </authorList>
    </citation>
    <scope>NUCLEOTIDE SEQUENCE [LARGE SCALE MRNA] OF 87-343 (ISOFORM 2)</scope>
    <source>
        <tissue>Amygdala</tissue>
    </source>
</reference>
<reference key="7">
    <citation type="journal article" date="2006" name="Science">
        <title>The consensus coding sequences of human breast and colorectal cancers.</title>
        <authorList>
            <person name="Sjoeblom T."/>
            <person name="Jones S."/>
            <person name="Wood L.D."/>
            <person name="Parsons D.W."/>
            <person name="Lin J."/>
            <person name="Barber T.D."/>
            <person name="Mandelker D."/>
            <person name="Leary R.J."/>
            <person name="Ptak J."/>
            <person name="Silliman N."/>
            <person name="Szabo S."/>
            <person name="Buckhaults P."/>
            <person name="Farrell C."/>
            <person name="Meeh P."/>
            <person name="Markowitz S.D."/>
            <person name="Willis J."/>
            <person name="Dawson D."/>
            <person name="Willson J.K.V."/>
            <person name="Gazdar A.F."/>
            <person name="Hartigan J."/>
            <person name="Wu L."/>
            <person name="Liu C."/>
            <person name="Parmigiani G."/>
            <person name="Park B.H."/>
            <person name="Bachman K.E."/>
            <person name="Papadopoulos N."/>
            <person name="Vogelstein B."/>
            <person name="Kinzler K.W."/>
            <person name="Velculescu V.E."/>
        </authorList>
    </citation>
    <scope>VARIANT [LARGE SCALE ANALYSIS] MET-155</scope>
</reference>